<evidence type="ECO:0000255" key="1">
    <source>
        <dbReference type="HAMAP-Rule" id="MF_00202"/>
    </source>
</evidence>
<keyword id="KW-0963">Cytoplasm</keyword>
<keyword id="KW-0413">Isomerase</keyword>
<keyword id="KW-0414">Isoprene biosynthesis</keyword>
<keyword id="KW-0460">Magnesium</keyword>
<keyword id="KW-0464">Manganese</keyword>
<keyword id="KW-0479">Metal-binding</keyword>
<reference key="1">
    <citation type="journal article" date="2011" name="J. Bacteriol.">
        <title>Comparative genomics of 28 Salmonella enterica isolates: evidence for CRISPR-mediated adaptive sublineage evolution.</title>
        <authorList>
            <person name="Fricke W.F."/>
            <person name="Mammel M.K."/>
            <person name="McDermott P.F."/>
            <person name="Tartera C."/>
            <person name="White D.G."/>
            <person name="Leclerc J.E."/>
            <person name="Ravel J."/>
            <person name="Cebula T.A."/>
        </authorList>
    </citation>
    <scope>NUCLEOTIDE SEQUENCE [LARGE SCALE GENOMIC DNA]</scope>
    <source>
        <strain>CT_02021853</strain>
    </source>
</reference>
<protein>
    <recommendedName>
        <fullName evidence="1">Isopentenyl-diphosphate Delta-isomerase</fullName>
        <shortName evidence="1">IPP isomerase</shortName>
        <ecNumber evidence="1">5.3.3.2</ecNumber>
    </recommendedName>
    <alternativeName>
        <fullName evidence="1">IPP:DMAPP isomerase</fullName>
    </alternativeName>
    <alternativeName>
        <fullName evidence="1">Isopentenyl pyrophosphate isomerase</fullName>
    </alternativeName>
</protein>
<proteinExistence type="inferred from homology"/>
<comment type="function">
    <text evidence="1">Catalyzes the 1,3-allylic rearrangement of the homoallylic substrate isopentenyl (IPP) to its highly electrophilic allylic isomer, dimethylallyl diphosphate (DMAPP).</text>
</comment>
<comment type="catalytic activity">
    <reaction evidence="1">
        <text>isopentenyl diphosphate = dimethylallyl diphosphate</text>
        <dbReference type="Rhea" id="RHEA:23284"/>
        <dbReference type="ChEBI" id="CHEBI:57623"/>
        <dbReference type="ChEBI" id="CHEBI:128769"/>
        <dbReference type="EC" id="5.3.3.2"/>
    </reaction>
</comment>
<comment type="cofactor">
    <cofactor evidence="1">
        <name>Mg(2+)</name>
        <dbReference type="ChEBI" id="CHEBI:18420"/>
    </cofactor>
    <text evidence="1">Binds 1 Mg(2+) ion per subunit. The magnesium ion binds only when substrate is bound.</text>
</comment>
<comment type="cofactor">
    <cofactor evidence="1">
        <name>Mn(2+)</name>
        <dbReference type="ChEBI" id="CHEBI:29035"/>
    </cofactor>
    <text evidence="1">Binds 1 Mn(2+) ion per subunit.</text>
</comment>
<comment type="pathway">
    <text evidence="1">Isoprenoid biosynthesis; dimethylallyl diphosphate biosynthesis; dimethylallyl diphosphate from isopentenyl diphosphate: step 1/1.</text>
</comment>
<comment type="subunit">
    <text evidence="1">Homodimer.</text>
</comment>
<comment type="subcellular location">
    <subcellularLocation>
        <location evidence="1">Cytoplasm</location>
    </subcellularLocation>
</comment>
<comment type="similarity">
    <text evidence="1">Belongs to the IPP isomerase type 1 family.</text>
</comment>
<organism>
    <name type="scientific">Salmonella dublin (strain CT_02021853)</name>
    <dbReference type="NCBI Taxonomy" id="439851"/>
    <lineage>
        <taxon>Bacteria</taxon>
        <taxon>Pseudomonadati</taxon>
        <taxon>Pseudomonadota</taxon>
        <taxon>Gammaproteobacteria</taxon>
        <taxon>Enterobacterales</taxon>
        <taxon>Enterobacteriaceae</taxon>
        <taxon>Salmonella</taxon>
    </lineage>
</organism>
<sequence length="181" mass="20781">MTEEHVVLLDEQDKPSGTLEKYAAHTLNTPLHLAFSCWLFNEDGQLLVTRRSLSKKAWPGVWTNSVCGHPQQGETTEEAIIRRCRFELGVEITDLTPVYPHFSYRATDPNGIVENEVCPVFAARATSVLQVNSEEVMDYQWSEFKSVWKSLLATPWAFSPWMVMQASDEQARERLLNYCQR</sequence>
<name>IDI_SALDC</name>
<gene>
    <name evidence="1" type="primary">idi</name>
    <name type="ordered locus">SeD_A3375</name>
</gene>
<feature type="chain" id="PRO_1000099441" description="Isopentenyl-diphosphate Delta-isomerase">
    <location>
        <begin position="1"/>
        <end position="181"/>
    </location>
</feature>
<feature type="domain" description="Nudix hydrolase">
    <location>
        <begin position="30"/>
        <end position="164"/>
    </location>
</feature>
<feature type="active site" evidence="1">
    <location>
        <position position="67"/>
    </location>
</feature>
<feature type="active site" evidence="1">
    <location>
        <position position="116"/>
    </location>
</feature>
<feature type="binding site" evidence="1">
    <location>
        <position position="25"/>
    </location>
    <ligand>
        <name>Mn(2+)</name>
        <dbReference type="ChEBI" id="CHEBI:29035"/>
    </ligand>
</feature>
<feature type="binding site" evidence="1">
    <location>
        <position position="32"/>
    </location>
    <ligand>
        <name>Mn(2+)</name>
        <dbReference type="ChEBI" id="CHEBI:29035"/>
    </ligand>
</feature>
<feature type="binding site" evidence="1">
    <location>
        <position position="69"/>
    </location>
    <ligand>
        <name>Mn(2+)</name>
        <dbReference type="ChEBI" id="CHEBI:29035"/>
    </ligand>
</feature>
<feature type="binding site" evidence="1">
    <location>
        <position position="87"/>
    </location>
    <ligand>
        <name>Mg(2+)</name>
        <dbReference type="ChEBI" id="CHEBI:18420"/>
    </ligand>
</feature>
<feature type="binding site" evidence="1">
    <location>
        <position position="114"/>
    </location>
    <ligand>
        <name>Mn(2+)</name>
        <dbReference type="ChEBI" id="CHEBI:29035"/>
    </ligand>
</feature>
<feature type="binding site" evidence="1">
    <location>
        <position position="116"/>
    </location>
    <ligand>
        <name>Mn(2+)</name>
        <dbReference type="ChEBI" id="CHEBI:29035"/>
    </ligand>
</feature>
<accession>B5FUF2</accession>
<dbReference type="EC" id="5.3.3.2" evidence="1"/>
<dbReference type="EMBL" id="CP001144">
    <property type="protein sequence ID" value="ACH73951.1"/>
    <property type="molecule type" value="Genomic_DNA"/>
</dbReference>
<dbReference type="RefSeq" id="WP_000133994.1">
    <property type="nucleotide sequence ID" value="NC_011205.1"/>
</dbReference>
<dbReference type="SMR" id="B5FUF2"/>
<dbReference type="KEGG" id="sed:SeD_A3375"/>
<dbReference type="HOGENOM" id="CLU_060552_2_0_6"/>
<dbReference type="UniPathway" id="UPA00059">
    <property type="reaction ID" value="UER00104"/>
</dbReference>
<dbReference type="Proteomes" id="UP000008322">
    <property type="component" value="Chromosome"/>
</dbReference>
<dbReference type="GO" id="GO:0005737">
    <property type="term" value="C:cytoplasm"/>
    <property type="evidence" value="ECO:0007669"/>
    <property type="project" value="UniProtKB-SubCell"/>
</dbReference>
<dbReference type="GO" id="GO:0004452">
    <property type="term" value="F:isopentenyl-diphosphate delta-isomerase activity"/>
    <property type="evidence" value="ECO:0007669"/>
    <property type="project" value="UniProtKB-UniRule"/>
</dbReference>
<dbReference type="GO" id="GO:0046872">
    <property type="term" value="F:metal ion binding"/>
    <property type="evidence" value="ECO:0007669"/>
    <property type="project" value="UniProtKB-KW"/>
</dbReference>
<dbReference type="GO" id="GO:0050992">
    <property type="term" value="P:dimethylallyl diphosphate biosynthetic process"/>
    <property type="evidence" value="ECO:0007669"/>
    <property type="project" value="UniProtKB-UniRule"/>
</dbReference>
<dbReference type="GO" id="GO:0008299">
    <property type="term" value="P:isoprenoid biosynthetic process"/>
    <property type="evidence" value="ECO:0007669"/>
    <property type="project" value="UniProtKB-KW"/>
</dbReference>
<dbReference type="CDD" id="cd02885">
    <property type="entry name" value="NUDIX_IPP_Isomerase"/>
    <property type="match status" value="1"/>
</dbReference>
<dbReference type="FunFam" id="3.90.79.10:FF:000009">
    <property type="entry name" value="Isopentenyl-diphosphate Delta-isomerase"/>
    <property type="match status" value="1"/>
</dbReference>
<dbReference type="Gene3D" id="3.90.79.10">
    <property type="entry name" value="Nucleoside Triphosphate Pyrophosphohydrolase"/>
    <property type="match status" value="1"/>
</dbReference>
<dbReference type="HAMAP" id="MF_00202">
    <property type="entry name" value="Idi"/>
    <property type="match status" value="1"/>
</dbReference>
<dbReference type="InterPro" id="IPR056375">
    <property type="entry name" value="Idi_bact"/>
</dbReference>
<dbReference type="InterPro" id="IPR011876">
    <property type="entry name" value="IsopentenylPP_isomerase_typ1"/>
</dbReference>
<dbReference type="InterPro" id="IPR015797">
    <property type="entry name" value="NUDIX_hydrolase-like_dom_sf"/>
</dbReference>
<dbReference type="InterPro" id="IPR000086">
    <property type="entry name" value="NUDIX_hydrolase_dom"/>
</dbReference>
<dbReference type="NCBIfam" id="TIGR02150">
    <property type="entry name" value="IPP_isom_1"/>
    <property type="match status" value="1"/>
</dbReference>
<dbReference type="NCBIfam" id="NF002995">
    <property type="entry name" value="PRK03759.1"/>
    <property type="match status" value="1"/>
</dbReference>
<dbReference type="PANTHER" id="PTHR10885">
    <property type="entry name" value="ISOPENTENYL-DIPHOSPHATE DELTA-ISOMERASE"/>
    <property type="match status" value="1"/>
</dbReference>
<dbReference type="PANTHER" id="PTHR10885:SF0">
    <property type="entry name" value="ISOPENTENYL-DIPHOSPHATE DELTA-ISOMERASE"/>
    <property type="match status" value="1"/>
</dbReference>
<dbReference type="Pfam" id="PF00293">
    <property type="entry name" value="NUDIX"/>
    <property type="match status" value="1"/>
</dbReference>
<dbReference type="PIRSF" id="PIRSF018427">
    <property type="entry name" value="Isopntndiph_ism"/>
    <property type="match status" value="1"/>
</dbReference>
<dbReference type="SUPFAM" id="SSF55811">
    <property type="entry name" value="Nudix"/>
    <property type="match status" value="1"/>
</dbReference>
<dbReference type="PROSITE" id="PS51462">
    <property type="entry name" value="NUDIX"/>
    <property type="match status" value="1"/>
</dbReference>